<organism>
    <name type="scientific">Arabidopsis thaliana</name>
    <name type="common">Mouse-ear cress</name>
    <dbReference type="NCBI Taxonomy" id="3702"/>
    <lineage>
        <taxon>Eukaryota</taxon>
        <taxon>Viridiplantae</taxon>
        <taxon>Streptophyta</taxon>
        <taxon>Embryophyta</taxon>
        <taxon>Tracheophyta</taxon>
        <taxon>Spermatophyta</taxon>
        <taxon>Magnoliopsida</taxon>
        <taxon>eudicotyledons</taxon>
        <taxon>Gunneridae</taxon>
        <taxon>Pentapetalae</taxon>
        <taxon>rosids</taxon>
        <taxon>malvids</taxon>
        <taxon>Brassicales</taxon>
        <taxon>Brassicaceae</taxon>
        <taxon>Camelineae</taxon>
        <taxon>Arabidopsis</taxon>
    </lineage>
</organism>
<accession>Q9SKK2</accession>
<accession>A0A1P8B265</accession>
<proteinExistence type="inferred from homology"/>
<gene>
    <name evidence="4" type="primary">RLP21</name>
    <name evidence="6" type="ordered locus">At2g25470</name>
    <name evidence="7" type="ORF">F13B15.13</name>
</gene>
<protein>
    <recommendedName>
        <fullName evidence="4">Receptor like protein 21</fullName>
        <shortName evidence="4">AtRLP21</shortName>
    </recommendedName>
</protein>
<sequence length="978" mass="109593">MLLAMEGKLFLCQYLIWVMLLLGQLHGCTSCIEKEREALLELKKYLMSRSRESGLDYVLPTWTNDTKSDCCQWDGIKCNRTSGRVIELSVGDMYFKESSPLNLSLLHPFEEVRSLNLSTEGYNEFNGFFDDVEGYRSLSGLRNLKIMDLSTNYFNYSTFPFLNAATSLTTLILTYNEMDGPFPIKGLKDLTNLELLDLRANKLNGSMQELIHLKKLKALDLSSNKFSSSMELQELQNLINLEVLGLAQNHVDGPIPIEVFCKLKNLRDLDLKGNHFVGQIPLCLGSLKKLRVLDLSSNQLSGDLPSSFSSLESLEYLSLSDNNFDGSFSLNPLTNLTNLKLFKLSSRSHTIQVKMESTWQPNFQLSVVVLRFCSLEKIPSFLLYQKKLRLVDLSSNNLSGNIPTWLLTNNPELEVLQLQNNSFTIFPIPTMVHNLQIFDFSANNIGKFPDKMDHALPNLVRLNGSNNGFQGYFPTSIGEMKNISFLDLSYNNFSGKLPRSFVTGCVSIMFLKLSHNKFSGRFLPRETNFPSLDVLRMDNNLFTGNIGGGLSNSTMLRILDMSNNGLSGAIPRWLFEFPYLDYVLISNNFLEGTIPPSLLGMPFLSFLDLSGNQFSGALPSHVDSELGIYMFLHNNNFTGPIPDTLLKSVQILDLRNNKLSGSIPQFDDTQSINILLLKGNNLTGSIPRELCDLSNVRLLDLSDNKLNGVIPSCLSNLSFGRLQEDAMALNIPPSFLQTSLEMELYKSTFLVDKIEVDRSTYQETEIKFAAKQRYDSYSGRSEFSEGILRLMYGMDLSNNELSGVIPTELGDLLKLRTLNLSHNSLLGSIPSSFSKLIDVESLDLSHNMLQGSIPQLLSSLTSLAVFDVSSNNLSGIIPQGRQFNTFEEESYLGNPLLCGPPTSRSCETNKSPEEADNGQEEEDDKAAIDMMVFYFSTASIYVTALIGVLVLMCFDCPWRRAWLRIVDAFIASAKHVLP</sequence>
<reference key="1">
    <citation type="journal article" date="1999" name="Nature">
        <title>Sequence and analysis of chromosome 2 of the plant Arabidopsis thaliana.</title>
        <authorList>
            <person name="Lin X."/>
            <person name="Kaul S."/>
            <person name="Rounsley S.D."/>
            <person name="Shea T.P."/>
            <person name="Benito M.-I."/>
            <person name="Town C.D."/>
            <person name="Fujii C.Y."/>
            <person name="Mason T.M."/>
            <person name="Bowman C.L."/>
            <person name="Barnstead M.E."/>
            <person name="Feldblyum T.V."/>
            <person name="Buell C.R."/>
            <person name="Ketchum K.A."/>
            <person name="Lee J.J."/>
            <person name="Ronning C.M."/>
            <person name="Koo H.L."/>
            <person name="Moffat K.S."/>
            <person name="Cronin L.A."/>
            <person name="Shen M."/>
            <person name="Pai G."/>
            <person name="Van Aken S."/>
            <person name="Umayam L."/>
            <person name="Tallon L.J."/>
            <person name="Gill J.E."/>
            <person name="Adams M.D."/>
            <person name="Carrera A.J."/>
            <person name="Creasy T.H."/>
            <person name="Goodman H.M."/>
            <person name="Somerville C.R."/>
            <person name="Copenhaver G.P."/>
            <person name="Preuss D."/>
            <person name="Nierman W.C."/>
            <person name="White O."/>
            <person name="Eisen J.A."/>
            <person name="Salzberg S.L."/>
            <person name="Fraser C.M."/>
            <person name="Venter J.C."/>
        </authorList>
    </citation>
    <scope>NUCLEOTIDE SEQUENCE [LARGE SCALE GENOMIC DNA]</scope>
    <source>
        <strain>cv. Columbia</strain>
    </source>
</reference>
<reference key="2">
    <citation type="journal article" date="2017" name="Plant J.">
        <title>Araport11: a complete reannotation of the Arabidopsis thaliana reference genome.</title>
        <authorList>
            <person name="Cheng C.Y."/>
            <person name="Krishnakumar V."/>
            <person name="Chan A.P."/>
            <person name="Thibaud-Nissen F."/>
            <person name="Schobel S."/>
            <person name="Town C.D."/>
        </authorList>
    </citation>
    <scope>GENOME REANNOTATION</scope>
    <source>
        <strain>cv. Columbia</strain>
    </source>
</reference>
<reference key="3">
    <citation type="journal article" date="2005" name="Plant Physiol.">
        <title>Phylogenomic analysis of the receptor-like proteins of rice and Arabidopsis.</title>
        <authorList>
            <person name="Fritz-Laylin L.K."/>
            <person name="Krishnamurthy N."/>
            <person name="Toer M."/>
            <person name="Sjoelander K.V."/>
            <person name="Jones J.D."/>
        </authorList>
    </citation>
    <scope>GENE FAMILY</scope>
</reference>
<reference key="4">
    <citation type="journal article" date="2008" name="Plant Physiol.">
        <title>A genome-wide functional investigation into the roles of receptor-like proteins in Arabidopsis.</title>
        <authorList>
            <person name="Wang G."/>
            <person name="Ellendorff U."/>
            <person name="Kemp B."/>
            <person name="Mansfield J.W."/>
            <person name="Forsyth A."/>
            <person name="Mitchell K."/>
            <person name="Bastas K."/>
            <person name="Liu C.-M."/>
            <person name="Woods-Toer A."/>
            <person name="Zipfel C."/>
            <person name="de Wit P.J.G.M."/>
            <person name="Jones J.D.G."/>
            <person name="Toer M."/>
            <person name="Thomma B.P.H.J."/>
        </authorList>
    </citation>
    <scope>GENE FAMILY</scope>
    <scope>NOMENCLATURE</scope>
</reference>
<evidence type="ECO:0000255" key="1"/>
<evidence type="ECO:0000255" key="2">
    <source>
        <dbReference type="PROSITE-ProRule" id="PRU00498"/>
    </source>
</evidence>
<evidence type="ECO:0000256" key="3">
    <source>
        <dbReference type="SAM" id="MobiDB-lite"/>
    </source>
</evidence>
<evidence type="ECO:0000303" key="4">
    <source>
    </source>
</evidence>
<evidence type="ECO:0000305" key="5"/>
<evidence type="ECO:0000312" key="6">
    <source>
        <dbReference type="Araport" id="AT2G25470"/>
    </source>
</evidence>
<evidence type="ECO:0000312" key="7">
    <source>
        <dbReference type="EMBL" id="AAD20706.1"/>
    </source>
</evidence>
<comment type="subcellular location">
    <subcellularLocation>
        <location evidence="5">Cell membrane</location>
        <topology evidence="5">Single-pass type I membrane protein</topology>
    </subcellularLocation>
</comment>
<comment type="similarity">
    <text evidence="5">Belongs to the RLP family.</text>
</comment>
<comment type="sequence caution" evidence="5">
    <conflict type="erroneous gene model prediction">
        <sequence resource="EMBL-CDS" id="AAD20706"/>
    </conflict>
</comment>
<feature type="signal peptide" evidence="1">
    <location>
        <begin position="1"/>
        <end position="27"/>
    </location>
</feature>
<feature type="chain" id="PRO_5010159029" description="Receptor like protein 21">
    <location>
        <begin position="28"/>
        <end position="978"/>
    </location>
</feature>
<feature type="topological domain" description="Extracellular" evidence="1">
    <location>
        <begin position="28"/>
        <end position="930"/>
    </location>
</feature>
<feature type="transmembrane region" description="Helical" evidence="1">
    <location>
        <begin position="931"/>
        <end position="951"/>
    </location>
</feature>
<feature type="topological domain" description="Cytoplasmic" evidence="1">
    <location>
        <begin position="952"/>
        <end position="978"/>
    </location>
</feature>
<feature type="repeat" description="LRR 1" evidence="1">
    <location>
        <begin position="141"/>
        <end position="167"/>
    </location>
</feature>
<feature type="repeat" description="LRR 2" evidence="1">
    <location>
        <begin position="169"/>
        <end position="189"/>
    </location>
</feature>
<feature type="repeat" description="LRR 3" evidence="1">
    <location>
        <begin position="190"/>
        <end position="213"/>
    </location>
</feature>
<feature type="repeat" description="LRR 4" evidence="1">
    <location>
        <begin position="214"/>
        <end position="237"/>
    </location>
</feature>
<feature type="repeat" description="LRR 5" evidence="1">
    <location>
        <begin position="238"/>
        <end position="262"/>
    </location>
</feature>
<feature type="repeat" description="LRR 6" evidence="1">
    <location>
        <begin position="264"/>
        <end position="287"/>
    </location>
</feature>
<feature type="repeat" description="LRR 7" evidence="1">
    <location>
        <begin position="288"/>
        <end position="310"/>
    </location>
</feature>
<feature type="repeat" description="LRR 8" evidence="1">
    <location>
        <begin position="312"/>
        <end position="335"/>
    </location>
</feature>
<feature type="repeat" description="LRR 9" evidence="1">
    <location>
        <begin position="337"/>
        <end position="361"/>
    </location>
</feature>
<feature type="repeat" description="LRR 10" evidence="1">
    <location>
        <begin position="362"/>
        <end position="385"/>
    </location>
</feature>
<feature type="repeat" description="LRR 11" evidence="1">
    <location>
        <begin position="386"/>
        <end position="409"/>
    </location>
</feature>
<feature type="repeat" description="LRR 12" evidence="1">
    <location>
        <begin position="410"/>
        <end position="432"/>
    </location>
</feature>
<feature type="repeat" description="LRR 13" evidence="1">
    <location>
        <begin position="433"/>
        <end position="455"/>
    </location>
</feature>
<feature type="repeat" description="LRR 14" evidence="1">
    <location>
        <begin position="457"/>
        <end position="480"/>
    </location>
</feature>
<feature type="repeat" description="LRR 15" evidence="1">
    <location>
        <begin position="481"/>
        <end position="504"/>
    </location>
</feature>
<feature type="repeat" description="LRR 16" evidence="1">
    <location>
        <begin position="506"/>
        <end position="529"/>
    </location>
</feature>
<feature type="repeat" description="LRR 17" evidence="1">
    <location>
        <begin position="530"/>
        <end position="553"/>
    </location>
</feature>
<feature type="repeat" description="LRR 18" evidence="1">
    <location>
        <begin position="554"/>
        <end position="577"/>
    </location>
</feature>
<feature type="repeat" description="LRR 19" evidence="1">
    <location>
        <begin position="579"/>
        <end position="601"/>
    </location>
</feature>
<feature type="repeat" description="LRR 20" evidence="1">
    <location>
        <begin position="602"/>
        <end position="625"/>
    </location>
</feature>
<feature type="repeat" description="LRR 21" evidence="1">
    <location>
        <begin position="627"/>
        <end position="646"/>
    </location>
</feature>
<feature type="repeat" description="LRR 22" evidence="1">
    <location>
        <begin position="647"/>
        <end position="671"/>
    </location>
</feature>
<feature type="repeat" description="LRR 23" evidence="1">
    <location>
        <begin position="673"/>
        <end position="693"/>
    </location>
</feature>
<feature type="repeat" description="LRR 24" evidence="1">
    <location>
        <begin position="694"/>
        <end position="716"/>
    </location>
</feature>
<feature type="repeat" description="LRR 25" evidence="1">
    <location>
        <begin position="788"/>
        <end position="811"/>
    </location>
</feature>
<feature type="repeat" description="LRR 26" evidence="1">
    <location>
        <begin position="812"/>
        <end position="835"/>
    </location>
</feature>
<feature type="repeat" description="LRR 27" evidence="1">
    <location>
        <begin position="837"/>
        <end position="859"/>
    </location>
</feature>
<feature type="repeat" description="LRR 28" evidence="1">
    <location>
        <begin position="860"/>
        <end position="885"/>
    </location>
</feature>
<feature type="region of interest" description="Disordered" evidence="3">
    <location>
        <begin position="902"/>
        <end position="922"/>
    </location>
</feature>
<feature type="glycosylation site" description="N-linked (GlcNAc...) asparagine" evidence="2">
    <location>
        <position position="64"/>
    </location>
</feature>
<feature type="glycosylation site" description="N-linked (GlcNAc...) asparagine" evidence="2">
    <location>
        <position position="79"/>
    </location>
</feature>
<feature type="glycosylation site" description="N-linked (GlcNAc...) asparagine" evidence="2">
    <location>
        <position position="102"/>
    </location>
</feature>
<feature type="glycosylation site" description="N-linked (GlcNAc...) asparagine" evidence="2">
    <location>
        <position position="116"/>
    </location>
</feature>
<feature type="glycosylation site" description="N-linked (GlcNAc...) asparagine" evidence="2">
    <location>
        <position position="155"/>
    </location>
</feature>
<feature type="glycosylation site" description="N-linked (GlcNAc...) asparagine" evidence="2">
    <location>
        <position position="204"/>
    </location>
</feature>
<feature type="glycosylation site" description="N-linked (GlcNAc...) asparagine" evidence="2">
    <location>
        <position position="335"/>
    </location>
</feature>
<feature type="glycosylation site" description="N-linked (GlcNAc...) asparagine" evidence="2">
    <location>
        <position position="397"/>
    </location>
</feature>
<feature type="glycosylation site" description="N-linked (GlcNAc...) asparagine" evidence="2">
    <location>
        <position position="420"/>
    </location>
</feature>
<feature type="glycosylation site" description="N-linked (GlcNAc...) asparagine" evidence="2">
    <location>
        <position position="463"/>
    </location>
</feature>
<feature type="glycosylation site" description="N-linked (GlcNAc...) asparagine" evidence="2">
    <location>
        <position position="482"/>
    </location>
</feature>
<feature type="glycosylation site" description="N-linked (GlcNAc...) asparagine" evidence="2">
    <location>
        <position position="492"/>
    </location>
</feature>
<feature type="glycosylation site" description="N-linked (GlcNAc...) asparagine" evidence="2">
    <location>
        <position position="552"/>
    </location>
</feature>
<feature type="glycosylation site" description="N-linked (GlcNAc...) asparagine" evidence="2">
    <location>
        <position position="636"/>
    </location>
</feature>
<feature type="glycosylation site" description="N-linked (GlcNAc...) asparagine" evidence="2">
    <location>
        <position position="681"/>
    </location>
</feature>
<feature type="glycosylation site" description="N-linked (GlcNAc...) asparagine" evidence="2">
    <location>
        <position position="716"/>
    </location>
</feature>
<feature type="glycosylation site" description="N-linked (GlcNAc...) asparagine" evidence="2">
    <location>
        <position position="819"/>
    </location>
</feature>
<feature type="glycosylation site" description="N-linked (GlcNAc...) asparagine" evidence="2">
    <location>
        <position position="872"/>
    </location>
</feature>
<keyword id="KW-1003">Cell membrane</keyword>
<keyword id="KW-0325">Glycoprotein</keyword>
<keyword id="KW-0433">Leucine-rich repeat</keyword>
<keyword id="KW-0472">Membrane</keyword>
<keyword id="KW-0675">Receptor</keyword>
<keyword id="KW-1185">Reference proteome</keyword>
<keyword id="KW-0677">Repeat</keyword>
<keyword id="KW-0732">Signal</keyword>
<keyword id="KW-0812">Transmembrane</keyword>
<keyword id="KW-1133">Transmembrane helix</keyword>
<name>RLP21_ARATH</name>
<dbReference type="EMBL" id="AC006300">
    <property type="protein sequence ID" value="AAD20706.1"/>
    <property type="status" value="ALT_SEQ"/>
    <property type="molecule type" value="Genomic_DNA"/>
</dbReference>
<dbReference type="EMBL" id="CP002685">
    <property type="protein sequence ID" value="ANM62952.1"/>
    <property type="molecule type" value="Genomic_DNA"/>
</dbReference>
<dbReference type="PIR" id="G84648">
    <property type="entry name" value="G84648"/>
</dbReference>
<dbReference type="RefSeq" id="NP_001325073.1">
    <property type="nucleotide sequence ID" value="NM_001335999.1"/>
</dbReference>
<dbReference type="SMR" id="Q9SKK2"/>
<dbReference type="STRING" id="3702.Q9SKK2"/>
<dbReference type="GlyCosmos" id="Q9SKK2">
    <property type="glycosylation" value="18 sites, No reported glycans"/>
</dbReference>
<dbReference type="GlyGen" id="Q9SKK2">
    <property type="glycosylation" value="18 sites"/>
</dbReference>
<dbReference type="PaxDb" id="3702-AT2G25470.1"/>
<dbReference type="EnsemblPlants" id="AT2G25470.3">
    <property type="protein sequence ID" value="AT2G25470.3"/>
    <property type="gene ID" value="AT2G25470"/>
</dbReference>
<dbReference type="GeneID" id="817085"/>
<dbReference type="Gramene" id="AT2G25470.3">
    <property type="protein sequence ID" value="AT2G25470.3"/>
    <property type="gene ID" value="AT2G25470"/>
</dbReference>
<dbReference type="KEGG" id="ath:AT2G25470"/>
<dbReference type="Araport" id="AT2G25470"/>
<dbReference type="TAIR" id="AT2G25470">
    <property type="gene designation" value="RLP21"/>
</dbReference>
<dbReference type="InParanoid" id="Q9SKK2"/>
<dbReference type="PhylomeDB" id="Q9SKK2"/>
<dbReference type="PRO" id="PR:Q9SKK2"/>
<dbReference type="Proteomes" id="UP000006548">
    <property type="component" value="Chromosome 2"/>
</dbReference>
<dbReference type="ExpressionAtlas" id="Q9SKK2">
    <property type="expression patterns" value="baseline and differential"/>
</dbReference>
<dbReference type="GO" id="GO:0005886">
    <property type="term" value="C:plasma membrane"/>
    <property type="evidence" value="ECO:0007669"/>
    <property type="project" value="UniProtKB-SubCell"/>
</dbReference>
<dbReference type="FunFam" id="3.80.10.10:FF:001347">
    <property type="entry name" value="LRR receptor-like serine/threonine-protein kinase GSO2"/>
    <property type="match status" value="1"/>
</dbReference>
<dbReference type="FunFam" id="3.80.10.10:FF:001579">
    <property type="entry name" value="LRR receptor-like serine/threonine-protein kinase GSO2"/>
    <property type="match status" value="1"/>
</dbReference>
<dbReference type="FunFam" id="3.80.10.10:FF:000470">
    <property type="entry name" value="LRR receptor-like serine/threonine-protein kinase RPK2"/>
    <property type="match status" value="1"/>
</dbReference>
<dbReference type="Gene3D" id="3.80.10.10">
    <property type="entry name" value="Ribonuclease Inhibitor"/>
    <property type="match status" value="6"/>
</dbReference>
<dbReference type="InterPro" id="IPR001611">
    <property type="entry name" value="Leu-rich_rpt"/>
</dbReference>
<dbReference type="InterPro" id="IPR003591">
    <property type="entry name" value="Leu-rich_rpt_typical-subtyp"/>
</dbReference>
<dbReference type="InterPro" id="IPR032675">
    <property type="entry name" value="LRR_dom_sf"/>
</dbReference>
<dbReference type="InterPro" id="IPR013210">
    <property type="entry name" value="LRR_N_plant-typ"/>
</dbReference>
<dbReference type="InterPro" id="IPR055414">
    <property type="entry name" value="LRR_R13L4/SHOC2-like"/>
</dbReference>
<dbReference type="InterPro" id="IPR051502">
    <property type="entry name" value="RLP_Defense_Trigger"/>
</dbReference>
<dbReference type="PANTHER" id="PTHR48062">
    <property type="entry name" value="RECEPTOR-LIKE PROTEIN 14"/>
    <property type="match status" value="1"/>
</dbReference>
<dbReference type="PANTHER" id="PTHR48062:SF52">
    <property type="entry name" value="RECEPTOR-LIKE PROTEIN 8-RELATED"/>
    <property type="match status" value="1"/>
</dbReference>
<dbReference type="Pfam" id="PF00560">
    <property type="entry name" value="LRR_1"/>
    <property type="match status" value="7"/>
</dbReference>
<dbReference type="Pfam" id="PF23598">
    <property type="entry name" value="LRR_14"/>
    <property type="match status" value="1"/>
</dbReference>
<dbReference type="Pfam" id="PF13855">
    <property type="entry name" value="LRR_8"/>
    <property type="match status" value="1"/>
</dbReference>
<dbReference type="Pfam" id="PF08263">
    <property type="entry name" value="LRRNT_2"/>
    <property type="match status" value="1"/>
</dbReference>
<dbReference type="PRINTS" id="PR00019">
    <property type="entry name" value="LEURICHRPT"/>
</dbReference>
<dbReference type="SMART" id="SM00365">
    <property type="entry name" value="LRR_SD22"/>
    <property type="match status" value="7"/>
</dbReference>
<dbReference type="SMART" id="SM00369">
    <property type="entry name" value="LRR_TYP"/>
    <property type="match status" value="12"/>
</dbReference>
<dbReference type="SUPFAM" id="SSF52058">
    <property type="entry name" value="L domain-like"/>
    <property type="match status" value="1"/>
</dbReference>
<dbReference type="SUPFAM" id="SSF52047">
    <property type="entry name" value="RNI-like"/>
    <property type="match status" value="2"/>
</dbReference>
<dbReference type="PROSITE" id="PS51450">
    <property type="entry name" value="LRR"/>
    <property type="match status" value="19"/>
</dbReference>